<name>MURR_ECODH</name>
<sequence length="285" mass="31192">MLYLTKISNAGSEFTENEQKIADFLQANVSELQSVSSRQMAKQLGISQSSIVKFAQKLGAQGFTELRMALIGEYSASREKTNATALHLHSSITSDDSLEVIARKLNREKELALEQTCALLDYARLQKIIEVISKAPFIQITGLGGSALVGRDLSFKLMKIGYRVACEADTHVQATVSQALKKGDVQIAISYSGSKKEIVLCAEAARKQGATVIAITSLTDSPLRRLAHFTLDTVSGETEWRSSSMSTRTAQNSVTDLLFVGLVQLNDVESLKMIQRSSELTQRLK</sequence>
<evidence type="ECO:0000255" key="1">
    <source>
        <dbReference type="HAMAP-Rule" id="MF_02108"/>
    </source>
</evidence>
<proteinExistence type="inferred from homology"/>
<organism>
    <name type="scientific">Escherichia coli (strain K12 / DH10B)</name>
    <dbReference type="NCBI Taxonomy" id="316385"/>
    <lineage>
        <taxon>Bacteria</taxon>
        <taxon>Pseudomonadati</taxon>
        <taxon>Pseudomonadota</taxon>
        <taxon>Gammaproteobacteria</taxon>
        <taxon>Enterobacterales</taxon>
        <taxon>Enterobacteriaceae</taxon>
        <taxon>Escherichia</taxon>
    </lineage>
</organism>
<comment type="function">
    <text evidence="1">Represses the expression of the murPQ operon involved in the uptake and degradation of N-acetylmuramic acid (MurNAc). Binds to two adjacent inverted repeats within the operator region. MurNAc 6-phosphate, the substrate of MurQ, is the specific inducer that weakens binding of MurR to the operator.</text>
</comment>
<comment type="pathway">
    <text>Amino-sugar metabolism; N-acetylmuramate degradation [regulation].</text>
</comment>
<comment type="subunit">
    <text evidence="1">Homotetramer.</text>
</comment>
<keyword id="KW-0119">Carbohydrate metabolism</keyword>
<keyword id="KW-0238">DNA-binding</keyword>
<keyword id="KW-0678">Repressor</keyword>
<keyword id="KW-0804">Transcription</keyword>
<keyword id="KW-0805">Transcription regulation</keyword>
<dbReference type="EMBL" id="CP000948">
    <property type="protein sequence ID" value="ACB03578.1"/>
    <property type="molecule type" value="Genomic_DNA"/>
</dbReference>
<dbReference type="RefSeq" id="WP_000966470.1">
    <property type="nucleotide sequence ID" value="NC_010473.1"/>
</dbReference>
<dbReference type="SMR" id="B1XA98"/>
<dbReference type="KEGG" id="ecd:ECDH10B_2592"/>
<dbReference type="HOGENOM" id="CLU_055769_0_2_6"/>
<dbReference type="UniPathway" id="UPA00342"/>
<dbReference type="GO" id="GO:0097367">
    <property type="term" value="F:carbohydrate derivative binding"/>
    <property type="evidence" value="ECO:0007669"/>
    <property type="project" value="InterPro"/>
</dbReference>
<dbReference type="GO" id="GO:0003677">
    <property type="term" value="F:DNA binding"/>
    <property type="evidence" value="ECO:0007669"/>
    <property type="project" value="UniProtKB-KW"/>
</dbReference>
<dbReference type="GO" id="GO:0003700">
    <property type="term" value="F:DNA-binding transcription factor activity"/>
    <property type="evidence" value="ECO:0007669"/>
    <property type="project" value="UniProtKB-UniRule"/>
</dbReference>
<dbReference type="GO" id="GO:1901135">
    <property type="term" value="P:carbohydrate derivative metabolic process"/>
    <property type="evidence" value="ECO:0007669"/>
    <property type="project" value="InterPro"/>
</dbReference>
<dbReference type="GO" id="GO:0097173">
    <property type="term" value="P:N-acetylmuramic acid catabolic process"/>
    <property type="evidence" value="ECO:0007669"/>
    <property type="project" value="UniProtKB-UniPathway"/>
</dbReference>
<dbReference type="GO" id="GO:0045892">
    <property type="term" value="P:negative regulation of DNA-templated transcription"/>
    <property type="evidence" value="ECO:0007669"/>
    <property type="project" value="UniProtKB-UniRule"/>
</dbReference>
<dbReference type="GO" id="GO:0043470">
    <property type="term" value="P:regulation of carbohydrate catabolic process"/>
    <property type="evidence" value="ECO:0007669"/>
    <property type="project" value="UniProtKB-UniRule"/>
</dbReference>
<dbReference type="CDD" id="cd05013">
    <property type="entry name" value="SIS_RpiR"/>
    <property type="match status" value="1"/>
</dbReference>
<dbReference type="FunFam" id="3.40.50.10490:FF:000028">
    <property type="entry name" value="HTH-type transcriptional regulator MurR"/>
    <property type="match status" value="1"/>
</dbReference>
<dbReference type="Gene3D" id="3.40.50.10490">
    <property type="entry name" value="Glucose-6-phosphate isomerase like protein, domain 1"/>
    <property type="match status" value="1"/>
</dbReference>
<dbReference type="Gene3D" id="1.10.10.10">
    <property type="entry name" value="Winged helix-like DNA-binding domain superfamily/Winged helix DNA-binding domain"/>
    <property type="match status" value="1"/>
</dbReference>
<dbReference type="HAMAP" id="MF_02108">
    <property type="entry name" value="HTH_type_MurR"/>
    <property type="match status" value="1"/>
</dbReference>
<dbReference type="InterPro" id="IPR009057">
    <property type="entry name" value="Homeodomain-like_sf"/>
</dbReference>
<dbReference type="InterPro" id="IPR000281">
    <property type="entry name" value="HTH_RpiR"/>
</dbReference>
<dbReference type="InterPro" id="IPR047640">
    <property type="entry name" value="RpiR-like"/>
</dbReference>
<dbReference type="InterPro" id="IPR035472">
    <property type="entry name" value="RpiR-like_SIS"/>
</dbReference>
<dbReference type="InterPro" id="IPR001347">
    <property type="entry name" value="SIS_dom"/>
</dbReference>
<dbReference type="InterPro" id="IPR046348">
    <property type="entry name" value="SIS_dom_sf"/>
</dbReference>
<dbReference type="InterPro" id="IPR022821">
    <property type="entry name" value="Tscrpt_reg_HTH_MurR"/>
</dbReference>
<dbReference type="InterPro" id="IPR036388">
    <property type="entry name" value="WH-like_DNA-bd_sf"/>
</dbReference>
<dbReference type="NCBIfam" id="NF012026">
    <property type="entry name" value="PRK15482.1"/>
    <property type="match status" value="1"/>
</dbReference>
<dbReference type="PANTHER" id="PTHR30514">
    <property type="entry name" value="GLUCOKINASE"/>
    <property type="match status" value="1"/>
</dbReference>
<dbReference type="PANTHER" id="PTHR30514:SF17">
    <property type="entry name" value="HTH-TYPE TRANSCRIPTIONAL REGULATOR MURR"/>
    <property type="match status" value="1"/>
</dbReference>
<dbReference type="Pfam" id="PF01418">
    <property type="entry name" value="HTH_6"/>
    <property type="match status" value="1"/>
</dbReference>
<dbReference type="Pfam" id="PF01380">
    <property type="entry name" value="SIS"/>
    <property type="match status" value="1"/>
</dbReference>
<dbReference type="SUPFAM" id="SSF46689">
    <property type="entry name" value="Homeodomain-like"/>
    <property type="match status" value="1"/>
</dbReference>
<dbReference type="SUPFAM" id="SSF53697">
    <property type="entry name" value="SIS domain"/>
    <property type="match status" value="1"/>
</dbReference>
<dbReference type="PROSITE" id="PS51071">
    <property type="entry name" value="HTH_RPIR"/>
    <property type="match status" value="1"/>
</dbReference>
<dbReference type="PROSITE" id="PS51464">
    <property type="entry name" value="SIS"/>
    <property type="match status" value="1"/>
</dbReference>
<feature type="chain" id="PRO_0000387758" description="HTH-type transcriptional regulator MurR">
    <location>
        <begin position="1"/>
        <end position="285"/>
    </location>
</feature>
<feature type="domain" description="HTH rpiR-type" evidence="1">
    <location>
        <begin position="1"/>
        <end position="77"/>
    </location>
</feature>
<feature type="domain" description="SIS" evidence="1">
    <location>
        <begin position="128"/>
        <end position="268"/>
    </location>
</feature>
<feature type="DNA-binding region" description="H-T-H motif" evidence="1">
    <location>
        <begin position="37"/>
        <end position="56"/>
    </location>
</feature>
<accession>B1XA98</accession>
<gene>
    <name evidence="1" type="primary">murR</name>
    <name type="ordered locus">ECDH10B_2592</name>
</gene>
<reference key="1">
    <citation type="journal article" date="2008" name="J. Bacteriol.">
        <title>The complete genome sequence of Escherichia coli DH10B: insights into the biology of a laboratory workhorse.</title>
        <authorList>
            <person name="Durfee T."/>
            <person name="Nelson R."/>
            <person name="Baldwin S."/>
            <person name="Plunkett G. III"/>
            <person name="Burland V."/>
            <person name="Mau B."/>
            <person name="Petrosino J.F."/>
            <person name="Qin X."/>
            <person name="Muzny D.M."/>
            <person name="Ayele M."/>
            <person name="Gibbs R.A."/>
            <person name="Csorgo B."/>
            <person name="Posfai G."/>
            <person name="Weinstock G.M."/>
            <person name="Blattner F.R."/>
        </authorList>
    </citation>
    <scope>NUCLEOTIDE SEQUENCE [LARGE SCALE GENOMIC DNA]</scope>
    <source>
        <strain>K12 / DH10B</strain>
    </source>
</reference>
<protein>
    <recommendedName>
        <fullName evidence="1">HTH-type transcriptional regulator MurR</fullName>
    </recommendedName>
    <alternativeName>
        <fullName evidence="1">MurPQ operon repressor</fullName>
    </alternativeName>
</protein>